<gene>
    <name evidence="1" type="primary">atpH</name>
</gene>
<accession>Q06GS3</accession>
<proteinExistence type="inferred from homology"/>
<name>ATPH_PIPCE</name>
<reference key="1">
    <citation type="journal article" date="2006" name="BMC Evol. Biol.">
        <title>Complete plastid genome sequences of Drimys, Liriodendron, and Piper: implications for the phylogenetic relationships of magnoliids.</title>
        <authorList>
            <person name="Cai Z."/>
            <person name="Penaflor C."/>
            <person name="Kuehl J.V."/>
            <person name="Leebens-Mack J."/>
            <person name="Carlson J.E."/>
            <person name="dePamphilis C.W."/>
            <person name="Boore J.L."/>
            <person name="Jansen R.K."/>
        </authorList>
    </citation>
    <scope>NUCLEOTIDE SEQUENCE [LARGE SCALE GENOMIC DNA]</scope>
</reference>
<geneLocation type="chloroplast"/>
<comment type="function">
    <text evidence="1">F(1)F(0) ATP synthase produces ATP from ADP in the presence of a proton or sodium gradient. F-type ATPases consist of two structural domains, F(1) containing the extramembraneous catalytic core and F(0) containing the membrane proton channel, linked together by a central stalk and a peripheral stalk. During catalysis, ATP synthesis in the catalytic domain of F(1) is coupled via a rotary mechanism of the central stalk subunits to proton translocation.</text>
</comment>
<comment type="function">
    <text evidence="1">Key component of the F(0) channel; it plays a direct role in translocation across the membrane. A homomeric c-ring of between 10-14 subunits forms the central stalk rotor element with the F(1) delta and epsilon subunits.</text>
</comment>
<comment type="subunit">
    <text evidence="1">F-type ATPases have 2 components, F(1) - the catalytic core - and F(0) - the membrane proton channel. F(1) has five subunits: alpha(3), beta(3), gamma(1), delta(1), epsilon(1). F(0) has four main subunits: a(1), b(1), b'(1) and c(10-14). The alpha and beta chains form an alternating ring which encloses part of the gamma chain. F(1) is attached to F(0) by a central stalk formed by the gamma and epsilon chains, while a peripheral stalk is formed by the delta, b and b' chains.</text>
</comment>
<comment type="subcellular location">
    <subcellularLocation>
        <location evidence="1">Plastid</location>
        <location evidence="1">Chloroplast thylakoid membrane</location>
        <topology evidence="1">Multi-pass membrane protein</topology>
    </subcellularLocation>
</comment>
<comment type="miscellaneous">
    <text>In plastids the F-type ATPase is also known as CF(1)CF(0).</text>
</comment>
<comment type="similarity">
    <text evidence="1">Belongs to the ATPase C chain family.</text>
</comment>
<protein>
    <recommendedName>
        <fullName evidence="1">ATP synthase subunit c, chloroplastic</fullName>
    </recommendedName>
    <alternativeName>
        <fullName evidence="1">ATP synthase F(0) sector subunit c</fullName>
    </alternativeName>
    <alternativeName>
        <fullName evidence="1">ATPase subunit III</fullName>
    </alternativeName>
    <alternativeName>
        <fullName evidence="1">F-type ATPase subunit c</fullName>
        <shortName evidence="1">F-ATPase subunit c</shortName>
    </alternativeName>
    <alternativeName>
        <fullName evidence="1">Lipid-binding protein</fullName>
    </alternativeName>
</protein>
<sequence length="81" mass="8004">MNPLISAASVIAAGLAVGLASIGPGIGQGTAAGQAVEGIARQPEAEGKIRGTLLLSLAFMEALTIYGLVVALALLFANPFV</sequence>
<dbReference type="EMBL" id="DQ887677">
    <property type="protein sequence ID" value="ABI14459.1"/>
    <property type="molecule type" value="Genomic_DNA"/>
</dbReference>
<dbReference type="RefSeq" id="YP_784460.1">
    <property type="nucleotide sequence ID" value="NC_008457.1"/>
</dbReference>
<dbReference type="SMR" id="Q06GS3"/>
<dbReference type="GeneID" id="4363772"/>
<dbReference type="GO" id="GO:0009535">
    <property type="term" value="C:chloroplast thylakoid membrane"/>
    <property type="evidence" value="ECO:0007669"/>
    <property type="project" value="UniProtKB-SubCell"/>
</dbReference>
<dbReference type="GO" id="GO:0045259">
    <property type="term" value="C:proton-transporting ATP synthase complex"/>
    <property type="evidence" value="ECO:0007669"/>
    <property type="project" value="UniProtKB-KW"/>
</dbReference>
<dbReference type="GO" id="GO:0033177">
    <property type="term" value="C:proton-transporting two-sector ATPase complex, proton-transporting domain"/>
    <property type="evidence" value="ECO:0007669"/>
    <property type="project" value="InterPro"/>
</dbReference>
<dbReference type="GO" id="GO:0008289">
    <property type="term" value="F:lipid binding"/>
    <property type="evidence" value="ECO:0007669"/>
    <property type="project" value="UniProtKB-KW"/>
</dbReference>
<dbReference type="GO" id="GO:0046933">
    <property type="term" value="F:proton-transporting ATP synthase activity, rotational mechanism"/>
    <property type="evidence" value="ECO:0007669"/>
    <property type="project" value="UniProtKB-UniRule"/>
</dbReference>
<dbReference type="CDD" id="cd18183">
    <property type="entry name" value="ATP-synt_Fo_c_ATPH"/>
    <property type="match status" value="1"/>
</dbReference>
<dbReference type="FunFam" id="1.20.20.10:FF:000001">
    <property type="entry name" value="ATP synthase subunit c, chloroplastic"/>
    <property type="match status" value="1"/>
</dbReference>
<dbReference type="Gene3D" id="1.20.20.10">
    <property type="entry name" value="F1F0 ATP synthase subunit C"/>
    <property type="match status" value="1"/>
</dbReference>
<dbReference type="HAMAP" id="MF_01396">
    <property type="entry name" value="ATP_synth_c_bact"/>
    <property type="match status" value="1"/>
</dbReference>
<dbReference type="InterPro" id="IPR005953">
    <property type="entry name" value="ATP_synth_csu_bac/chlpt"/>
</dbReference>
<dbReference type="InterPro" id="IPR000454">
    <property type="entry name" value="ATP_synth_F0_csu"/>
</dbReference>
<dbReference type="InterPro" id="IPR020537">
    <property type="entry name" value="ATP_synth_F0_csu_DDCD_BS"/>
</dbReference>
<dbReference type="InterPro" id="IPR038662">
    <property type="entry name" value="ATP_synth_F0_csu_sf"/>
</dbReference>
<dbReference type="InterPro" id="IPR002379">
    <property type="entry name" value="ATPase_proteolipid_c-like_dom"/>
</dbReference>
<dbReference type="InterPro" id="IPR035921">
    <property type="entry name" value="F/V-ATP_Csub_sf"/>
</dbReference>
<dbReference type="NCBIfam" id="TIGR01260">
    <property type="entry name" value="ATP_synt_c"/>
    <property type="match status" value="1"/>
</dbReference>
<dbReference type="NCBIfam" id="NF005608">
    <property type="entry name" value="PRK07354.1"/>
    <property type="match status" value="1"/>
</dbReference>
<dbReference type="PANTHER" id="PTHR10031">
    <property type="entry name" value="ATP SYNTHASE LIPID-BINDING PROTEIN, MITOCHONDRIAL"/>
    <property type="match status" value="1"/>
</dbReference>
<dbReference type="PANTHER" id="PTHR10031:SF0">
    <property type="entry name" value="ATPASE PROTEIN 9"/>
    <property type="match status" value="1"/>
</dbReference>
<dbReference type="Pfam" id="PF00137">
    <property type="entry name" value="ATP-synt_C"/>
    <property type="match status" value="1"/>
</dbReference>
<dbReference type="PRINTS" id="PR00124">
    <property type="entry name" value="ATPASEC"/>
</dbReference>
<dbReference type="SUPFAM" id="SSF81333">
    <property type="entry name" value="F1F0 ATP synthase subunit C"/>
    <property type="match status" value="1"/>
</dbReference>
<dbReference type="PROSITE" id="PS00605">
    <property type="entry name" value="ATPASE_C"/>
    <property type="match status" value="1"/>
</dbReference>
<feature type="chain" id="PRO_0000362955" description="ATP synthase subunit c, chloroplastic">
    <location>
        <begin position="1"/>
        <end position="81"/>
    </location>
</feature>
<feature type="transmembrane region" description="Helical" evidence="1">
    <location>
        <begin position="7"/>
        <end position="27"/>
    </location>
</feature>
<feature type="transmembrane region" description="Helical" evidence="1">
    <location>
        <begin position="57"/>
        <end position="77"/>
    </location>
</feature>
<feature type="site" description="Reversibly protonated during proton transport" evidence="1">
    <location>
        <position position="61"/>
    </location>
</feature>
<keyword id="KW-0066">ATP synthesis</keyword>
<keyword id="KW-0138">CF(0)</keyword>
<keyword id="KW-0150">Chloroplast</keyword>
<keyword id="KW-0375">Hydrogen ion transport</keyword>
<keyword id="KW-0406">Ion transport</keyword>
<keyword id="KW-0446">Lipid-binding</keyword>
<keyword id="KW-0472">Membrane</keyword>
<keyword id="KW-0934">Plastid</keyword>
<keyword id="KW-0793">Thylakoid</keyword>
<keyword id="KW-0812">Transmembrane</keyword>
<keyword id="KW-1133">Transmembrane helix</keyword>
<keyword id="KW-0813">Transport</keyword>
<organism>
    <name type="scientific">Piper cenocladum</name>
    <name type="common">Ant piper</name>
    <dbReference type="NCBI Taxonomy" id="398741"/>
    <lineage>
        <taxon>Eukaryota</taxon>
        <taxon>Viridiplantae</taxon>
        <taxon>Streptophyta</taxon>
        <taxon>Embryophyta</taxon>
        <taxon>Tracheophyta</taxon>
        <taxon>Spermatophyta</taxon>
        <taxon>Magnoliopsida</taxon>
        <taxon>Magnoliidae</taxon>
        <taxon>Piperales</taxon>
        <taxon>Piperaceae</taxon>
        <taxon>Piper</taxon>
    </lineage>
</organism>
<evidence type="ECO:0000255" key="1">
    <source>
        <dbReference type="HAMAP-Rule" id="MF_01396"/>
    </source>
</evidence>